<accession>Q5C6R9</accession>
<reference key="1">
    <citation type="journal article" date="2006" name="PLoS Pathog.">
        <title>New perspectives on host-parasite interplay by comparative transcriptomic and proteomic analyses of Schistosoma japonicum.</title>
        <authorList>
            <person name="Liu F."/>
            <person name="Lu J."/>
            <person name="Hu W."/>
            <person name="Wang S.-Y."/>
            <person name="Cui S.-J."/>
            <person name="Chi M."/>
            <person name="Yan Q."/>
            <person name="Wang X.-R."/>
            <person name="Song H.-D."/>
            <person name="Xu X.-N."/>
            <person name="Wang J.-J."/>
            <person name="Zhang X.-L."/>
            <person name="Zhang X."/>
            <person name="Wang Z.-Q."/>
            <person name="Xue C.-L."/>
            <person name="Brindley P.J."/>
            <person name="McManus D.P."/>
            <person name="Yang P.-Y."/>
            <person name="Feng Z."/>
            <person name="Chen Z."/>
            <person name="Han Z.-G."/>
        </authorList>
    </citation>
    <scope>NUCLEOTIDE SEQUENCE [LARGE SCALE MRNA]</scope>
</reference>
<evidence type="ECO:0000255" key="1"/>
<evidence type="ECO:0000256" key="2">
    <source>
        <dbReference type="SAM" id="MobiDB-lite"/>
    </source>
</evidence>
<evidence type="ECO:0000305" key="3"/>
<keyword id="KW-1015">Disulfide bond</keyword>
<keyword id="KW-0325">Glycoprotein</keyword>
<keyword id="KW-0960">Knottin</keyword>
<keyword id="KW-0964">Secreted</keyword>
<keyword id="KW-0732">Signal</keyword>
<dbReference type="EMBL" id="AY808766">
    <property type="protein sequence ID" value="AAX24655.2"/>
    <property type="status" value="ALT_INIT"/>
    <property type="molecule type" value="mRNA"/>
</dbReference>
<dbReference type="SMR" id="Q5C6R9"/>
<dbReference type="GO" id="GO:0005576">
    <property type="term" value="C:extracellular region"/>
    <property type="evidence" value="ECO:0007669"/>
    <property type="project" value="UniProtKB-SubCell"/>
</dbReference>
<dbReference type="InterPro" id="IPR021712">
    <property type="entry name" value="UPF0506"/>
</dbReference>
<dbReference type="Pfam" id="PF11703">
    <property type="entry name" value="UPF0506"/>
    <property type="match status" value="1"/>
</dbReference>
<sequence length="150" mass="17383">MNTCIQLLILCLVTVINSENSTDNSTENTIKNETENATETELPETFENETENVSETELPEIIENETKIEALNLPQIPKQKYCRTEGQYCSRTYFHRCCGNLVCQLHGFFNGTCVQCLAERKFCIWSSECCSKRCRLFRCRKNPYVQVIPY</sequence>
<protein>
    <recommendedName>
        <fullName>UPF0506 protein SJCHGC02381</fullName>
    </recommendedName>
</protein>
<name>SJ381_SCHJA</name>
<gene>
    <name type="ORF">SJCHGC02381</name>
</gene>
<proteinExistence type="evidence at transcript level"/>
<organism>
    <name type="scientific">Schistosoma japonicum</name>
    <name type="common">Blood fluke</name>
    <dbReference type="NCBI Taxonomy" id="6182"/>
    <lineage>
        <taxon>Eukaryota</taxon>
        <taxon>Metazoa</taxon>
        <taxon>Spiralia</taxon>
        <taxon>Lophotrochozoa</taxon>
        <taxon>Platyhelminthes</taxon>
        <taxon>Trematoda</taxon>
        <taxon>Digenea</taxon>
        <taxon>Strigeidida</taxon>
        <taxon>Schistosomatoidea</taxon>
        <taxon>Schistosomatidae</taxon>
        <taxon>Schistosoma</taxon>
    </lineage>
</organism>
<feature type="signal peptide" evidence="1">
    <location>
        <begin position="1"/>
        <end position="18"/>
    </location>
</feature>
<feature type="chain" id="PRO_0000311409" description="UPF0506 protein SJCHGC02381">
    <location>
        <begin position="19"/>
        <end position="150"/>
    </location>
</feature>
<feature type="region of interest" description="Disordered" evidence="2">
    <location>
        <begin position="22"/>
        <end position="49"/>
    </location>
</feature>
<feature type="compositionally biased region" description="Acidic residues" evidence="2">
    <location>
        <begin position="36"/>
        <end position="49"/>
    </location>
</feature>
<feature type="glycosylation site" description="N-linked (GlcNAc...) asparagine" evidence="1">
    <location>
        <position position="20"/>
    </location>
</feature>
<feature type="glycosylation site" description="N-linked (GlcNAc...) asparagine" evidence="1">
    <location>
        <position position="24"/>
    </location>
</feature>
<feature type="glycosylation site" description="N-linked (GlcNAc...) asparagine" evidence="1">
    <location>
        <position position="32"/>
    </location>
</feature>
<feature type="glycosylation site" description="N-linked (GlcNAc...) asparagine" evidence="1">
    <location>
        <position position="36"/>
    </location>
</feature>
<feature type="glycosylation site" description="N-linked (GlcNAc...) asparagine" evidence="1">
    <location>
        <position position="48"/>
    </location>
</feature>
<feature type="glycosylation site" description="N-linked (GlcNAc...) asparagine" evidence="1">
    <location>
        <position position="52"/>
    </location>
</feature>
<feature type="glycosylation site" description="N-linked (GlcNAc...) asparagine" evidence="1">
    <location>
        <position position="64"/>
    </location>
</feature>
<feature type="glycosylation site" description="N-linked (GlcNAc...) asparagine" evidence="1">
    <location>
        <position position="110"/>
    </location>
</feature>
<feature type="disulfide bond" evidence="3">
    <location>
        <begin position="116"/>
        <end position="130"/>
    </location>
</feature>
<feature type="disulfide bond" evidence="3">
    <location>
        <begin position="123"/>
        <end position="134"/>
    </location>
</feature>
<feature type="disulfide bond" evidence="3">
    <location>
        <begin position="129"/>
        <end position="139"/>
    </location>
</feature>
<comment type="subcellular location">
    <subcellularLocation>
        <location evidence="3">Secreted</location>
    </subcellularLocation>
</comment>
<comment type="domain">
    <text evidence="3">The presence of a 'disulfide through disulfide knot' structurally defines this protein as a knottin.</text>
</comment>
<comment type="similarity">
    <text evidence="3">Belongs to the UPF0506 family.</text>
</comment>
<comment type="sequence caution" evidence="3">
    <conflict type="erroneous initiation">
        <sequence resource="EMBL-CDS" id="AAX24655"/>
    </conflict>
</comment>